<organism>
    <name type="scientific">Rattus norvegicus</name>
    <name type="common">Rat</name>
    <dbReference type="NCBI Taxonomy" id="10116"/>
    <lineage>
        <taxon>Eukaryota</taxon>
        <taxon>Metazoa</taxon>
        <taxon>Chordata</taxon>
        <taxon>Craniata</taxon>
        <taxon>Vertebrata</taxon>
        <taxon>Euteleostomi</taxon>
        <taxon>Mammalia</taxon>
        <taxon>Eutheria</taxon>
        <taxon>Euarchontoglires</taxon>
        <taxon>Glires</taxon>
        <taxon>Rodentia</taxon>
        <taxon>Myomorpha</taxon>
        <taxon>Muroidea</taxon>
        <taxon>Muridae</taxon>
        <taxon>Murinae</taxon>
        <taxon>Rattus</taxon>
    </lineage>
</organism>
<sequence>MTDSKYFTTTKKGEIFELKAELNSDKKEKKKEAVKKVIASMTVGKDVSALFPDVVNCMQTDNLELKKLVYLYLMNYAKSQPDMAIMAVNTFVKDCEDPNPLIRALAVRTMGCIRVDKITEYLCEPLRKCLKDEDPYVRKTAAVCVAKLHDINAQLVEDQGFLDTLKDLISDSNPMVVANRVAALSEIAESHPSSNLLDLKAQSINKLLTALNECTEWAQIFILDCLGNYMPKDDREAQSICERVTPRLSHANSAVVLSAVKVLMKFMEMLSKDLDYYATLLKKLAPPLVTLLSAEPEPQYVPLRNINLIVQKRPEILKHEMKVFFVKYNDPIYVKLEKLDIMIRLASQANIAQVLAELKEYATEVDVDFVRKAVRAIGRCAIKVEQSAERCVSTLLDLIQTKVNYVVQEAIVVIKDIFRKYPNKYESVIATLCENLDSLDEPEARAAMIWIVGEYAERIDNADELLESFLDGFHDESTQVQLQLLTAIVKLFLKKPTETQELVQQVLSLATQDSDNPDLRDRGYIYWRLLSTDPVAAKEVVLAEKPLISEETDLIEPTLLDELICYIGTLASVYHKPPNAFVEGGRGVVHKSLPPRTASSESTESPEAAPAGAPASDQPDVIPAQGDLLGDLLNLDLGPPVSGPPLAASSVQMGAVDLLGGGLDSLMGDEPEGIGDSNFGAPPASVAAAAPARLGAPVSSGLSDLFDLTSGVGTLSGSYVAPKAVWLPAMKAKGLEISGTFTRQVGSISMDLQLTNKALQVMTDFAIQFNRNSFGLAPAAPLQVHAPLSPNQTVEISLPLNTVGSVMKMEPLNNLQVAVKNNIDVFYFSTLYPLHVLFVEDGKMDRQMFLATWKDIPNENEAQFQIRDCPLNTEAASSKLQSSNIFTVAKRTVEGQDMLYQSLKLTNGIWVLAELRIQPGNPSFTLSLKCRAPEVSQHDIQAYETILKN</sequence>
<evidence type="ECO:0000250" key="1">
    <source>
        <dbReference type="UniProtKB" id="O35643"/>
    </source>
</evidence>
<evidence type="ECO:0000250" key="2">
    <source>
        <dbReference type="UniProtKB" id="Q10567"/>
    </source>
</evidence>
<evidence type="ECO:0000256" key="3">
    <source>
        <dbReference type="SAM" id="MobiDB-lite"/>
    </source>
</evidence>
<evidence type="ECO:0000269" key="4">
    <source>
    </source>
</evidence>
<evidence type="ECO:0000305" key="5"/>
<evidence type="ECO:0000305" key="6">
    <source>
    </source>
</evidence>
<accession>P52303</accession>
<comment type="function">
    <text>Subunit of clathrin-associated adaptor protein complex 1 that plays a role in protein sorting in the late-Golgi/trans-Golgi network (TGN) and/or endosomes. The AP complexes mediate both the recruitment of clathrin to membranes and the recognition of sorting signals within the cytosolic tails of transmembrane cargo molecules.</text>
</comment>
<comment type="subunit">
    <text evidence="4">Adaptor protein complex 1 (AP-1) is a heterotetramer composed of two large adaptins (gamma-type subunit AP1G1 and beta-type subunit AP1B1), a medium adaptin (mu-type subunit AP1M1 or AP1M2) and a small adaptin (sigma-type subunit AP1S1 or AP1S2 or AP1S3).</text>
</comment>
<comment type="subcellular location">
    <subcellularLocation>
        <location>Golgi apparatus</location>
    </subcellularLocation>
    <subcellularLocation>
        <location>Cytoplasmic vesicle</location>
        <location>Clathrin-coated vesicle membrane</location>
        <topology>Peripheral membrane protein</topology>
        <orientation>Cytoplasmic side</orientation>
    </subcellularLocation>
    <text>Component of the coat surrounding the cytoplasmic face of coated vesicles located at the Golgi complex.</text>
</comment>
<comment type="alternative products">
    <event type="alternative splicing"/>
    <isoform>
        <id>P52303-1</id>
        <name>A</name>
        <sequence type="displayed"/>
    </isoform>
    <isoform>
        <id>P52303-2</id>
        <name>B</name>
        <sequence type="described" ref="VSP_000164"/>
    </isoform>
</comment>
<comment type="PTM">
    <text>The N-terminus is blocked.</text>
</comment>
<comment type="similarity">
    <text evidence="5">Belongs to the adaptor complexes large subunit family.</text>
</comment>
<comment type="caution">
    <text evidence="6">Was originally thought to be part of the complex AP-2.</text>
</comment>
<proteinExistence type="evidence at protein level"/>
<keyword id="KW-0002">3D-structure</keyword>
<keyword id="KW-0007">Acetylation</keyword>
<keyword id="KW-0025">Alternative splicing</keyword>
<keyword id="KW-0968">Cytoplasmic vesicle</keyword>
<keyword id="KW-0903">Direct protein sequencing</keyword>
<keyword id="KW-0333">Golgi apparatus</keyword>
<keyword id="KW-0472">Membrane</keyword>
<keyword id="KW-0944">Nitration</keyword>
<keyword id="KW-0653">Protein transport</keyword>
<keyword id="KW-1185">Reference proteome</keyword>
<keyword id="KW-0813">Transport</keyword>
<gene>
    <name type="primary">Ap1b1</name>
    <name type="synonym">Adtb1</name>
</gene>
<feature type="chain" id="PRO_0000193740" description="AP-1 complex subunit beta-1">
    <location>
        <begin position="1"/>
        <end position="949"/>
    </location>
</feature>
<feature type="region of interest" description="Disordered" evidence="3">
    <location>
        <begin position="592"/>
        <end position="623"/>
    </location>
</feature>
<feature type="compositionally biased region" description="Low complexity" evidence="3">
    <location>
        <begin position="594"/>
        <end position="616"/>
    </location>
</feature>
<feature type="modified residue" description="N6-acetyllysine" evidence="2">
    <location>
        <position position="318"/>
    </location>
</feature>
<feature type="modified residue" description="3'-nitrotyrosine" evidence="1">
    <location>
        <position position="574"/>
    </location>
</feature>
<feature type="splice variant" id="VSP_000164" description="In isoform B." evidence="5">
    <location>
        <begin position="667"/>
        <end position="673"/>
    </location>
</feature>
<protein>
    <recommendedName>
        <fullName>AP-1 complex subunit beta-1</fullName>
    </recommendedName>
    <alternativeName>
        <fullName>Adaptor protein complex AP-1 subunit beta-1</fullName>
    </alternativeName>
    <alternativeName>
        <fullName>Adaptor-related protein complex 1 subunit beta-1</fullName>
    </alternativeName>
    <alternativeName>
        <fullName>Beta-1-adaptin</fullName>
    </alternativeName>
    <alternativeName>
        <fullName>Beta-adaptin 1</fullName>
    </alternativeName>
    <alternativeName>
        <fullName>Clathrin assembly protein complex 1 beta large chain</fullName>
    </alternativeName>
    <alternativeName>
        <fullName>Golgi adaptor HA1/AP1 adaptin beta subunit</fullName>
    </alternativeName>
</protein>
<dbReference type="EMBL" id="M77245">
    <property type="protein sequence ID" value="AAA40807.1"/>
    <property type="molecule type" value="mRNA"/>
</dbReference>
<dbReference type="PIR" id="B32105">
    <property type="entry name" value="B32105"/>
</dbReference>
<dbReference type="RefSeq" id="NP_058973.1">
    <property type="nucleotide sequence ID" value="NM_017277.1"/>
</dbReference>
<dbReference type="PDB" id="1W63">
    <property type="method" value="X-ray"/>
    <property type="resolution" value="4.00 A"/>
    <property type="chains" value="B/D/F/H/J/L=1-584"/>
</dbReference>
<dbReference type="PDBsum" id="1W63"/>
<dbReference type="SMR" id="P52303"/>
<dbReference type="BioGRID" id="248285">
    <property type="interactions" value="5"/>
</dbReference>
<dbReference type="CORUM" id="P52303"/>
<dbReference type="FunCoup" id="P52303">
    <property type="interactions" value="2564"/>
</dbReference>
<dbReference type="IntAct" id="P52303">
    <property type="interactions" value="4"/>
</dbReference>
<dbReference type="MINT" id="P52303"/>
<dbReference type="STRING" id="10116.ENSRNOP00000054218"/>
<dbReference type="iPTMnet" id="P52303"/>
<dbReference type="PhosphoSitePlus" id="P52303"/>
<dbReference type="SwissPalm" id="P52303"/>
<dbReference type="jPOST" id="P52303"/>
<dbReference type="PaxDb" id="10116-ENSRNOP00000054218"/>
<dbReference type="UCSC" id="RGD:2064">
    <molecule id="P52303-1"/>
    <property type="organism name" value="rat"/>
</dbReference>
<dbReference type="AGR" id="RGD:2064"/>
<dbReference type="RGD" id="2064">
    <property type="gene designation" value="Ap1b1"/>
</dbReference>
<dbReference type="eggNOG" id="KOG1061">
    <property type="taxonomic scope" value="Eukaryota"/>
</dbReference>
<dbReference type="InParanoid" id="P52303"/>
<dbReference type="PhylomeDB" id="P52303"/>
<dbReference type="Reactome" id="R-RNO-2132295">
    <property type="pathway name" value="MHC class II antigen presentation"/>
</dbReference>
<dbReference type="Reactome" id="R-RNO-432720">
    <property type="pathway name" value="Lysosome Vesicle Biogenesis"/>
</dbReference>
<dbReference type="Reactome" id="R-RNO-432722">
    <property type="pathway name" value="Golgi Associated Vesicle Biogenesis"/>
</dbReference>
<dbReference type="EvolutionaryTrace" id="P52303"/>
<dbReference type="PRO" id="PR:P52303"/>
<dbReference type="Proteomes" id="UP000002494">
    <property type="component" value="Unplaced"/>
</dbReference>
<dbReference type="GO" id="GO:0030131">
    <property type="term" value="C:clathrin adaptor complex"/>
    <property type="evidence" value="ECO:0007669"/>
    <property type="project" value="InterPro"/>
</dbReference>
<dbReference type="GO" id="GO:0030118">
    <property type="term" value="C:clathrin coat"/>
    <property type="evidence" value="ECO:0000305"/>
    <property type="project" value="BHF-UCL"/>
</dbReference>
<dbReference type="GO" id="GO:0030665">
    <property type="term" value="C:clathrin-coated vesicle membrane"/>
    <property type="evidence" value="ECO:0007669"/>
    <property type="project" value="UniProtKB-SubCell"/>
</dbReference>
<dbReference type="GO" id="GO:0005794">
    <property type="term" value="C:Golgi apparatus"/>
    <property type="evidence" value="ECO:0007669"/>
    <property type="project" value="UniProtKB-SubCell"/>
</dbReference>
<dbReference type="GO" id="GO:0008021">
    <property type="term" value="C:synaptic vesicle"/>
    <property type="evidence" value="ECO:0000266"/>
    <property type="project" value="RGD"/>
</dbReference>
<dbReference type="GO" id="GO:0030276">
    <property type="term" value="F:clathrin binding"/>
    <property type="evidence" value="ECO:0000305"/>
    <property type="project" value="BHF-UCL"/>
</dbReference>
<dbReference type="GO" id="GO:0019901">
    <property type="term" value="F:protein kinase binding"/>
    <property type="evidence" value="ECO:0000266"/>
    <property type="project" value="RGD"/>
</dbReference>
<dbReference type="GO" id="GO:0120283">
    <property type="term" value="F:protein serine/threonine kinase binding"/>
    <property type="evidence" value="ECO:0000353"/>
    <property type="project" value="RGD"/>
</dbReference>
<dbReference type="GO" id="GO:0048268">
    <property type="term" value="P:clathrin coat assembly"/>
    <property type="evidence" value="ECO:0000314"/>
    <property type="project" value="BHF-UCL"/>
</dbReference>
<dbReference type="GO" id="GO:0007368">
    <property type="term" value="P:determination of left/right symmetry"/>
    <property type="evidence" value="ECO:0000266"/>
    <property type="project" value="RGD"/>
</dbReference>
<dbReference type="GO" id="GO:0007507">
    <property type="term" value="P:heart development"/>
    <property type="evidence" value="ECO:0000266"/>
    <property type="project" value="RGD"/>
</dbReference>
<dbReference type="GO" id="GO:0006886">
    <property type="term" value="P:intracellular protein transport"/>
    <property type="evidence" value="ECO:0007669"/>
    <property type="project" value="InterPro"/>
</dbReference>
<dbReference type="GO" id="GO:0001822">
    <property type="term" value="P:kidney development"/>
    <property type="evidence" value="ECO:0000266"/>
    <property type="project" value="RGD"/>
</dbReference>
<dbReference type="GO" id="GO:0016192">
    <property type="term" value="P:vesicle-mediated transport"/>
    <property type="evidence" value="ECO:0007669"/>
    <property type="project" value="InterPro"/>
</dbReference>
<dbReference type="FunFam" id="1.25.10.10:FF:000002">
    <property type="entry name" value="AP complex subunit beta"/>
    <property type="match status" value="1"/>
</dbReference>
<dbReference type="FunFam" id="2.60.40.1150:FF:000001">
    <property type="entry name" value="AP complex subunit beta"/>
    <property type="match status" value="1"/>
</dbReference>
<dbReference type="FunFam" id="3.30.310.10:FF:000003">
    <property type="entry name" value="AP complex subunit beta"/>
    <property type="match status" value="1"/>
</dbReference>
<dbReference type="Gene3D" id="2.60.40.1150">
    <property type="match status" value="1"/>
</dbReference>
<dbReference type="Gene3D" id="1.25.10.10">
    <property type="entry name" value="Leucine-rich Repeat Variant"/>
    <property type="match status" value="1"/>
</dbReference>
<dbReference type="Gene3D" id="3.30.310.10">
    <property type="entry name" value="TATA-Binding Protein"/>
    <property type="match status" value="1"/>
</dbReference>
<dbReference type="InterPro" id="IPR026739">
    <property type="entry name" value="AP_beta"/>
</dbReference>
<dbReference type="InterPro" id="IPR016342">
    <property type="entry name" value="AP_complex_bsu_1_2_4"/>
</dbReference>
<dbReference type="InterPro" id="IPR011989">
    <property type="entry name" value="ARM-like"/>
</dbReference>
<dbReference type="InterPro" id="IPR016024">
    <property type="entry name" value="ARM-type_fold"/>
</dbReference>
<dbReference type="InterPro" id="IPR015151">
    <property type="entry name" value="B-adaptin_app_sub_C"/>
</dbReference>
<dbReference type="InterPro" id="IPR002553">
    <property type="entry name" value="Clathrin/coatomer_adapt-like_N"/>
</dbReference>
<dbReference type="InterPro" id="IPR008152">
    <property type="entry name" value="Clathrin_a/b/g-adaptin_app_Ig"/>
</dbReference>
<dbReference type="InterPro" id="IPR013041">
    <property type="entry name" value="Clathrin_app_Ig-like_sf"/>
</dbReference>
<dbReference type="InterPro" id="IPR013037">
    <property type="entry name" value="Clathrin_b-adaptin_app_Ig-like"/>
</dbReference>
<dbReference type="InterPro" id="IPR009028">
    <property type="entry name" value="Coatomer/calthrin_app_sub_C"/>
</dbReference>
<dbReference type="InterPro" id="IPR012295">
    <property type="entry name" value="TBP_dom_sf"/>
</dbReference>
<dbReference type="PANTHER" id="PTHR11134">
    <property type="entry name" value="ADAPTOR COMPLEX SUBUNIT BETA FAMILY MEMBER"/>
    <property type="match status" value="1"/>
</dbReference>
<dbReference type="Pfam" id="PF01602">
    <property type="entry name" value="Adaptin_N"/>
    <property type="match status" value="1"/>
</dbReference>
<dbReference type="Pfam" id="PF02883">
    <property type="entry name" value="Alpha_adaptinC2"/>
    <property type="match status" value="1"/>
</dbReference>
<dbReference type="Pfam" id="PF09066">
    <property type="entry name" value="B2-adapt-app_C"/>
    <property type="match status" value="1"/>
</dbReference>
<dbReference type="PIRSF" id="PIRSF002291">
    <property type="entry name" value="AP_complex_beta"/>
    <property type="match status" value="1"/>
</dbReference>
<dbReference type="SMART" id="SM00809">
    <property type="entry name" value="Alpha_adaptinC2"/>
    <property type="match status" value="1"/>
</dbReference>
<dbReference type="SMART" id="SM01020">
    <property type="entry name" value="B2-adapt-app_C"/>
    <property type="match status" value="1"/>
</dbReference>
<dbReference type="SUPFAM" id="SSF48371">
    <property type="entry name" value="ARM repeat"/>
    <property type="match status" value="1"/>
</dbReference>
<dbReference type="SUPFAM" id="SSF49348">
    <property type="entry name" value="Clathrin adaptor appendage domain"/>
    <property type="match status" value="1"/>
</dbReference>
<dbReference type="SUPFAM" id="SSF55711">
    <property type="entry name" value="Subdomain of clathrin and coatomer appendage domain"/>
    <property type="match status" value="1"/>
</dbReference>
<reference key="1">
    <citation type="journal article" date="1989" name="Proc. Natl. Acad. Sci. U.S.A.">
        <title>Structural and functional division into two domains of the large (100- to 115-kDa) chains of the clathrin-associated protein complex AP-2.</title>
        <authorList>
            <person name="Kirchhausen T."/>
            <person name="Nathanson K.L."/>
            <person name="Matsui W."/>
            <person name="Vaisberg A."/>
            <person name="Chow E.P."/>
            <person name="Burne C."/>
            <person name="Keen J.H."/>
            <person name="Davis A.E."/>
        </authorList>
    </citation>
    <scope>NUCLEOTIDE SEQUENCE [MRNA]</scope>
    <scope>PARTIAL PROTEIN SEQUENCE</scope>
    <source>
        <tissue>Brain</tissue>
    </source>
</reference>
<reference key="2">
    <citation type="journal article" date="1994" name="Hum. Mol. Genet.">
        <title>Characterization of a new member of the human beta-adaptin gene family from chromosome 22q12, a candidate meningioma gene.</title>
        <authorList>
            <person name="Peyrard M."/>
            <person name="Fransson I."/>
            <person name="Xie Y.-G."/>
            <person name="Han F.-Y."/>
            <person name="Ruttledge M.H."/>
            <person name="Swahn S."/>
            <person name="Collins J.E."/>
            <person name="Dunham I."/>
            <person name="Collins V.P."/>
            <person name="Dumanski J.P."/>
        </authorList>
    </citation>
    <scope>CHARACTERIZATION OF ISOFORMS A AND B</scope>
</reference>
<reference key="3">
    <citation type="journal article" date="2004" name="Proc. Natl. Acad. Sci. U.S.A.">
        <title>Crystal structure of the clathrin adaptor protein 1 core.</title>
        <authorList>
            <person name="Heldwein E.E."/>
            <person name="Macia E."/>
            <person name="Wang J."/>
            <person name="Yin H.L."/>
            <person name="Kirchhausen T."/>
            <person name="Harrison S.C."/>
        </authorList>
    </citation>
    <scope>X-RAY CRYSTALLOGRAPHY (4.0 ANGSTROMS) OF 1-584</scope>
    <scope>SUBUNIT</scope>
</reference>
<name>AP1B1_RAT</name>